<feature type="chain" id="PRO_0000340274" description="Ubiquinol-cytochrome c reductase complex assembly factor 6">
    <location>
        <begin position="1"/>
        <end position="67"/>
    </location>
</feature>
<feature type="topological domain" description="Mitochondrial matrix" evidence="1">
    <location>
        <begin position="1"/>
        <end position="8"/>
    </location>
</feature>
<feature type="transmembrane region" description="Helical; Signal-anchor for type II membrane protein" evidence="2">
    <location>
        <begin position="9"/>
        <end position="25"/>
    </location>
</feature>
<feature type="topological domain" description="Mitochondrial intermembrane" evidence="1">
    <location>
        <begin position="26"/>
        <end position="67"/>
    </location>
</feature>
<accession>Q8BTC1</accession>
<protein>
    <recommendedName>
        <fullName>Ubiquinol-cytochrome c reductase complex assembly factor 6</fullName>
    </recommendedName>
    <alternativeName>
        <fullName evidence="5">Protein BRAWNIN</fullName>
    </alternativeName>
</protein>
<proteinExistence type="evidence at protein level"/>
<dbReference type="EMBL" id="AK004515">
    <property type="protein sequence ID" value="BAC25085.1"/>
    <property type="molecule type" value="mRNA"/>
</dbReference>
<dbReference type="CCDS" id="CCDS48653.1"/>
<dbReference type="RefSeq" id="NP_001129039.1">
    <property type="nucleotide sequence ID" value="NM_001135567.1"/>
</dbReference>
<dbReference type="RefSeq" id="NP_001129040.1">
    <property type="nucleotide sequence ID" value="NM_001135568.1"/>
</dbReference>
<dbReference type="RefSeq" id="NP_001129041.1">
    <property type="nucleotide sequence ID" value="NM_001135569.1"/>
</dbReference>
<dbReference type="SMR" id="Q8BTC1"/>
<dbReference type="FunCoup" id="Q8BTC1">
    <property type="interactions" value="723"/>
</dbReference>
<dbReference type="STRING" id="10090.ENSMUSP00000078593"/>
<dbReference type="iPTMnet" id="Q8BTC1"/>
<dbReference type="PhosphoSitePlus" id="Q8BTC1"/>
<dbReference type="PaxDb" id="10090-ENSMUSP00000078593"/>
<dbReference type="PeptideAtlas" id="Q8BTC1"/>
<dbReference type="Ensembl" id="ENSMUST00000079648.12">
    <property type="protein sequence ID" value="ENSMUSP00000078593.5"/>
    <property type="gene ID" value="ENSMUSG00000063320.12"/>
</dbReference>
<dbReference type="Ensembl" id="ENSMUST00000176200.8">
    <property type="protein sequence ID" value="ENSMUSP00000134868.2"/>
    <property type="gene ID" value="ENSMUSG00000063320.12"/>
</dbReference>
<dbReference type="Ensembl" id="ENSMUST00000183363.2">
    <property type="protein sequence ID" value="ENSMUSP00000139234.2"/>
    <property type="gene ID" value="ENSMUSG00000063320.12"/>
</dbReference>
<dbReference type="Ensembl" id="ENSMUST00000185168.8">
    <property type="protein sequence ID" value="ENSMUSP00000139244.2"/>
    <property type="gene ID" value="ENSMUSG00000063320.12"/>
</dbReference>
<dbReference type="GeneID" id="544717"/>
<dbReference type="KEGG" id="mmu:544717"/>
<dbReference type="UCSC" id="uc007gjp.2">
    <property type="organism name" value="mouse"/>
</dbReference>
<dbReference type="AGR" id="MGI:3698433"/>
<dbReference type="CTD" id="728568"/>
<dbReference type="MGI" id="MGI:3698433">
    <property type="gene designation" value="Uqcc6"/>
</dbReference>
<dbReference type="VEuPathDB" id="HostDB:ENSMUSG00000063320"/>
<dbReference type="eggNOG" id="ENOG502S9EP">
    <property type="taxonomic scope" value="Eukaryota"/>
</dbReference>
<dbReference type="GeneTree" id="ENSGT00940000173873"/>
<dbReference type="HOGENOM" id="CLU_202878_0_0_1"/>
<dbReference type="InParanoid" id="Q8BTC1"/>
<dbReference type="OMA" id="AVHRYYR"/>
<dbReference type="OrthoDB" id="63739at9989"/>
<dbReference type="PhylomeDB" id="Q8BTC1"/>
<dbReference type="TreeFam" id="TF333420"/>
<dbReference type="BioGRID-ORCS" id="544717">
    <property type="hits" value="3 hits in 81 CRISPR screens"/>
</dbReference>
<dbReference type="PRO" id="PR:Q8BTC1"/>
<dbReference type="Proteomes" id="UP000000589">
    <property type="component" value="Chromosome 10"/>
</dbReference>
<dbReference type="RNAct" id="Q8BTC1">
    <property type="molecule type" value="protein"/>
</dbReference>
<dbReference type="Bgee" id="ENSMUSG00000063320">
    <property type="expression patterns" value="Expressed in quadriceps femoris and 66 other cell types or tissues"/>
</dbReference>
<dbReference type="ExpressionAtlas" id="Q8BTC1">
    <property type="expression patterns" value="baseline and differential"/>
</dbReference>
<dbReference type="GO" id="GO:0005743">
    <property type="term" value="C:mitochondrial inner membrane"/>
    <property type="evidence" value="ECO:0000250"/>
    <property type="project" value="UniProtKB"/>
</dbReference>
<dbReference type="GO" id="GO:0005739">
    <property type="term" value="C:mitochondrion"/>
    <property type="evidence" value="ECO:0000314"/>
    <property type="project" value="UniProtKB"/>
</dbReference>
<dbReference type="GO" id="GO:0033617">
    <property type="term" value="P:mitochondrial cytochrome c oxidase assembly"/>
    <property type="evidence" value="ECO:0000250"/>
    <property type="project" value="UniProtKB"/>
</dbReference>
<dbReference type="GO" id="GO:0034551">
    <property type="term" value="P:mitochondrial respiratory chain complex III assembly"/>
    <property type="evidence" value="ECO:0000315"/>
    <property type="project" value="UniProtKB"/>
</dbReference>
<dbReference type="InterPro" id="IPR027858">
    <property type="entry name" value="BRAWNIN"/>
</dbReference>
<dbReference type="PANTHER" id="PTHR28492">
    <property type="entry name" value="HYPOTHETICAL PROTEIN LOC691921"/>
    <property type="match status" value="1"/>
</dbReference>
<dbReference type="PANTHER" id="PTHR28492:SF1">
    <property type="entry name" value="UBIQUINOL-CYTOCHROME-C REDUCTASE COMPLEX ASSEMBLY FACTOR 6"/>
    <property type="match status" value="1"/>
</dbReference>
<dbReference type="Pfam" id="PF14990">
    <property type="entry name" value="DUF4516"/>
    <property type="match status" value="1"/>
</dbReference>
<name>UQCC6_MOUSE</name>
<organism>
    <name type="scientific">Mus musculus</name>
    <name type="common">Mouse</name>
    <dbReference type="NCBI Taxonomy" id="10090"/>
    <lineage>
        <taxon>Eukaryota</taxon>
        <taxon>Metazoa</taxon>
        <taxon>Chordata</taxon>
        <taxon>Craniata</taxon>
        <taxon>Vertebrata</taxon>
        <taxon>Euteleostomi</taxon>
        <taxon>Mammalia</taxon>
        <taxon>Eutheria</taxon>
        <taxon>Euarchontoglires</taxon>
        <taxon>Glires</taxon>
        <taxon>Rodentia</taxon>
        <taxon>Myomorpha</taxon>
        <taxon>Muroidea</taxon>
        <taxon>Muridae</taxon>
        <taxon>Murinae</taxon>
        <taxon>Mus</taxon>
        <taxon>Mus</taxon>
    </lineage>
</organism>
<reference key="1">
    <citation type="journal article" date="2005" name="Science">
        <title>The transcriptional landscape of the mammalian genome.</title>
        <authorList>
            <person name="Carninci P."/>
            <person name="Kasukawa T."/>
            <person name="Katayama S."/>
            <person name="Gough J."/>
            <person name="Frith M.C."/>
            <person name="Maeda N."/>
            <person name="Oyama R."/>
            <person name="Ravasi T."/>
            <person name="Lenhard B."/>
            <person name="Wells C."/>
            <person name="Kodzius R."/>
            <person name="Shimokawa K."/>
            <person name="Bajic V.B."/>
            <person name="Brenner S.E."/>
            <person name="Batalov S."/>
            <person name="Forrest A.R."/>
            <person name="Zavolan M."/>
            <person name="Davis M.J."/>
            <person name="Wilming L.G."/>
            <person name="Aidinis V."/>
            <person name="Allen J.E."/>
            <person name="Ambesi-Impiombato A."/>
            <person name="Apweiler R."/>
            <person name="Aturaliya R.N."/>
            <person name="Bailey T.L."/>
            <person name="Bansal M."/>
            <person name="Baxter L."/>
            <person name="Beisel K.W."/>
            <person name="Bersano T."/>
            <person name="Bono H."/>
            <person name="Chalk A.M."/>
            <person name="Chiu K.P."/>
            <person name="Choudhary V."/>
            <person name="Christoffels A."/>
            <person name="Clutterbuck D.R."/>
            <person name="Crowe M.L."/>
            <person name="Dalla E."/>
            <person name="Dalrymple B.P."/>
            <person name="de Bono B."/>
            <person name="Della Gatta G."/>
            <person name="di Bernardo D."/>
            <person name="Down T."/>
            <person name="Engstrom P."/>
            <person name="Fagiolini M."/>
            <person name="Faulkner G."/>
            <person name="Fletcher C.F."/>
            <person name="Fukushima T."/>
            <person name="Furuno M."/>
            <person name="Futaki S."/>
            <person name="Gariboldi M."/>
            <person name="Georgii-Hemming P."/>
            <person name="Gingeras T.R."/>
            <person name="Gojobori T."/>
            <person name="Green R.E."/>
            <person name="Gustincich S."/>
            <person name="Harbers M."/>
            <person name="Hayashi Y."/>
            <person name="Hensch T.K."/>
            <person name="Hirokawa N."/>
            <person name="Hill D."/>
            <person name="Huminiecki L."/>
            <person name="Iacono M."/>
            <person name="Ikeo K."/>
            <person name="Iwama A."/>
            <person name="Ishikawa T."/>
            <person name="Jakt M."/>
            <person name="Kanapin A."/>
            <person name="Katoh M."/>
            <person name="Kawasawa Y."/>
            <person name="Kelso J."/>
            <person name="Kitamura H."/>
            <person name="Kitano H."/>
            <person name="Kollias G."/>
            <person name="Krishnan S.P."/>
            <person name="Kruger A."/>
            <person name="Kummerfeld S.K."/>
            <person name="Kurochkin I.V."/>
            <person name="Lareau L.F."/>
            <person name="Lazarevic D."/>
            <person name="Lipovich L."/>
            <person name="Liu J."/>
            <person name="Liuni S."/>
            <person name="McWilliam S."/>
            <person name="Madan Babu M."/>
            <person name="Madera M."/>
            <person name="Marchionni L."/>
            <person name="Matsuda H."/>
            <person name="Matsuzawa S."/>
            <person name="Miki H."/>
            <person name="Mignone F."/>
            <person name="Miyake S."/>
            <person name="Morris K."/>
            <person name="Mottagui-Tabar S."/>
            <person name="Mulder N."/>
            <person name="Nakano N."/>
            <person name="Nakauchi H."/>
            <person name="Ng P."/>
            <person name="Nilsson R."/>
            <person name="Nishiguchi S."/>
            <person name="Nishikawa S."/>
            <person name="Nori F."/>
            <person name="Ohara O."/>
            <person name="Okazaki Y."/>
            <person name="Orlando V."/>
            <person name="Pang K.C."/>
            <person name="Pavan W.J."/>
            <person name="Pavesi G."/>
            <person name="Pesole G."/>
            <person name="Petrovsky N."/>
            <person name="Piazza S."/>
            <person name="Reed J."/>
            <person name="Reid J.F."/>
            <person name="Ring B.Z."/>
            <person name="Ringwald M."/>
            <person name="Rost B."/>
            <person name="Ruan Y."/>
            <person name="Salzberg S.L."/>
            <person name="Sandelin A."/>
            <person name="Schneider C."/>
            <person name="Schoenbach C."/>
            <person name="Sekiguchi K."/>
            <person name="Semple C.A."/>
            <person name="Seno S."/>
            <person name="Sessa L."/>
            <person name="Sheng Y."/>
            <person name="Shibata Y."/>
            <person name="Shimada H."/>
            <person name="Shimada K."/>
            <person name="Silva D."/>
            <person name="Sinclair B."/>
            <person name="Sperling S."/>
            <person name="Stupka E."/>
            <person name="Sugiura K."/>
            <person name="Sultana R."/>
            <person name="Takenaka Y."/>
            <person name="Taki K."/>
            <person name="Tammoja K."/>
            <person name="Tan S.L."/>
            <person name="Tang S."/>
            <person name="Taylor M.S."/>
            <person name="Tegner J."/>
            <person name="Teichmann S.A."/>
            <person name="Ueda H.R."/>
            <person name="van Nimwegen E."/>
            <person name="Verardo R."/>
            <person name="Wei C.L."/>
            <person name="Yagi K."/>
            <person name="Yamanishi H."/>
            <person name="Zabarovsky E."/>
            <person name="Zhu S."/>
            <person name="Zimmer A."/>
            <person name="Hide W."/>
            <person name="Bult C."/>
            <person name="Grimmond S.M."/>
            <person name="Teasdale R.D."/>
            <person name="Liu E.T."/>
            <person name="Brusic V."/>
            <person name="Quackenbush J."/>
            <person name="Wahlestedt C."/>
            <person name="Mattick J.S."/>
            <person name="Hume D.A."/>
            <person name="Kai C."/>
            <person name="Sasaki D."/>
            <person name="Tomaru Y."/>
            <person name="Fukuda S."/>
            <person name="Kanamori-Katayama M."/>
            <person name="Suzuki M."/>
            <person name="Aoki J."/>
            <person name="Arakawa T."/>
            <person name="Iida J."/>
            <person name="Imamura K."/>
            <person name="Itoh M."/>
            <person name="Kato T."/>
            <person name="Kawaji H."/>
            <person name="Kawagashira N."/>
            <person name="Kawashima T."/>
            <person name="Kojima M."/>
            <person name="Kondo S."/>
            <person name="Konno H."/>
            <person name="Nakano K."/>
            <person name="Ninomiya N."/>
            <person name="Nishio T."/>
            <person name="Okada M."/>
            <person name="Plessy C."/>
            <person name="Shibata K."/>
            <person name="Shiraki T."/>
            <person name="Suzuki S."/>
            <person name="Tagami M."/>
            <person name="Waki K."/>
            <person name="Watahiki A."/>
            <person name="Okamura-Oho Y."/>
            <person name="Suzuki H."/>
            <person name="Kawai J."/>
            <person name="Hayashizaki Y."/>
        </authorList>
    </citation>
    <scope>NUCLEOTIDE SEQUENCE [LARGE SCALE MRNA]</scope>
    <source>
        <strain>C57BL/6J</strain>
    </source>
</reference>
<reference key="2">
    <citation type="journal article" date="2020" name="Nat. Commun.">
        <title>Mitochondrial peptide BRAWNIN is essential for vertebrate respiratory complex III assembly.</title>
        <authorList>
            <person name="Zhang S."/>
            <person name="Reljic B."/>
            <person name="Liang C."/>
            <person name="Kerouanton B."/>
            <person name="Francisco J.C."/>
            <person name="Peh J.H."/>
            <person name="Mary C."/>
            <person name="Jagannathan N.S."/>
            <person name="Olexiouk V."/>
            <person name="Tang C."/>
            <person name="Fidelito G."/>
            <person name="Nama S."/>
            <person name="Cheng R.K."/>
            <person name="Wee C.L."/>
            <person name="Wang L.C."/>
            <person name="Duek Roggli P."/>
            <person name="Sampath P."/>
            <person name="Lane L."/>
            <person name="Petretto E."/>
            <person name="Sobota R.M."/>
            <person name="Jesuthasan S."/>
            <person name="Tucker-Kellogg L."/>
            <person name="Reversade B."/>
            <person name="Menschaert G."/>
            <person name="Sun L."/>
            <person name="Stroud D.A."/>
            <person name="Ho L."/>
        </authorList>
    </citation>
    <scope>FUNCTION</scope>
    <scope>SUBCELLULAR LOCATION</scope>
    <scope>TISSUE SPECIFICITY</scope>
    <scope>INTERACTION WITH UQCRC1 AND UQCRQ</scope>
</reference>
<reference key="3">
    <citation type="journal article" date="2022" name="Cell Rep.">
        <title>Mitochondrial microproteins link metabolic cues to respiratory chain biogenesis.</title>
        <authorList>
            <person name="Liang C."/>
            <person name="Zhang S."/>
            <person name="Robinson D."/>
            <person name="Ploeg M.V."/>
            <person name="Wilson R."/>
            <person name="Nah J."/>
            <person name="Taylor D."/>
            <person name="Beh S."/>
            <person name="Lim R."/>
            <person name="Sun L."/>
            <person name="Muoio D.M."/>
            <person name="Stroud D.A."/>
            <person name="Ho L."/>
        </authorList>
    </citation>
    <scope>DISRUPTION PHENOTYPE</scope>
    <scope>FUNCTION</scope>
    <scope>SUBUNIT</scope>
    <scope>MASS SPECTROMETRY</scope>
    <scope>INTERACTION WITH MT-CYB</scope>
</reference>
<keyword id="KW-0472">Membrane</keyword>
<keyword id="KW-0496">Mitochondrion</keyword>
<keyword id="KW-0999">Mitochondrion inner membrane</keyword>
<keyword id="KW-1185">Reference proteome</keyword>
<keyword id="KW-0735">Signal-anchor</keyword>
<keyword id="KW-0812">Transmembrane</keyword>
<keyword id="KW-1133">Transmembrane helix</keyword>
<sequence length="67" mass="7540">MPGGVPWSAYLKMLSSSLLAMCAGAQVVHWYYRPDLTIPEIPPKPGELKTELLGLKERRHEPHVSQQ</sequence>
<comment type="function">
    <text evidence="1 3 4">Required for the assembly and stability of the mitochondrial ubiquinol-cytochrome c reductase complex (complex III or cytochrome b-c1 complex), a multisubunit transmembrane complex that is part of the mitochondrial electron transport chain (ETC) which drives oxidative phosphorylation (PubMed:32161263, PubMed:35977508). Mediates early complex III biogenesis (PubMed:35977508). Participates in regulating the levels of electron transport chain proteins, and therefore energy supply, in response to changes in energy demand (PubMed:35977508). Also required for cytochrome c oxidase complex (complex IV) assembly (By similarity).</text>
</comment>
<comment type="subunit">
    <text evidence="1 3 4">Interacts with UQCRC1 (PubMed:32161263). Interacts with UQCRQ (PubMed:32161263). Interacts with UQCC5 (By similarity). Forms a complex, named COMB/coordinator of mitochondrial CYTB biogenesis, composed of UQCC1, UQCC2, UQCC4, UQCC5 and UQCC6; stabilizes nascent cytochrome b/MT-CYB and promotes its membrane insertion (PubMed:35977508). Forms a complex, named COMA, composed of UQCC1, UQCC2 and UQCC4; activates MT-CYB translation (PubMed:35977508). Forms a complex, named COMC, composed of UQCC1, UQCC2; UQCC3 and UQCC4; mediates MT-CYB hemylation and association with the first nuclear-encoded complex III subunit UQCRQ (PubMed:35977508). Interacts with MT-CYB (PubMed:35977508).</text>
</comment>
<comment type="subcellular location">
    <subcellularLocation>
        <location evidence="7">Mitochondrion inner membrane</location>
        <topology evidence="1">Single-pass type II membrane protein</topology>
    </subcellularLocation>
</comment>
<comment type="tissue specificity">
    <text evidence="3">Highly expressed in brown adipose, cardiac and skeletal muscle (at protein level).</text>
</comment>
<comment type="disruption phenotype">
    <text evidence="4">Uqcc6 deficiency leads to complete loss of mitochondrial respiratory chain complex III, resulting in growth retardation and a mild increase in blood lactate levels and significantly decreased exercise tolerance. The subunits of mitochondrial respiratory chain complex I, II, IV, and V are not affected.</text>
</comment>
<comment type="similarity">
    <text evidence="6">Belongs to the UQCC6 family.</text>
</comment>
<gene>
    <name evidence="8" type="primary">Uqcc6</name>
    <name evidence="5" type="synonym">Br</name>
    <name evidence="5" type="synonym">Brawnin</name>
</gene>
<evidence type="ECO:0000250" key="1">
    <source>
        <dbReference type="UniProtKB" id="Q69YU5"/>
    </source>
</evidence>
<evidence type="ECO:0000255" key="2"/>
<evidence type="ECO:0000269" key="3">
    <source>
    </source>
</evidence>
<evidence type="ECO:0000269" key="4">
    <source>
    </source>
</evidence>
<evidence type="ECO:0000303" key="5">
    <source>
    </source>
</evidence>
<evidence type="ECO:0000305" key="6"/>
<evidence type="ECO:0000305" key="7">
    <source>
    </source>
</evidence>
<evidence type="ECO:0000312" key="8">
    <source>
        <dbReference type="MGI" id="MGI:3698433"/>
    </source>
</evidence>